<dbReference type="EC" id="3.1.-.-" evidence="1"/>
<dbReference type="EMBL" id="CR931997">
    <property type="protein sequence ID" value="CAI37504.1"/>
    <property type="molecule type" value="Genomic_DNA"/>
</dbReference>
<dbReference type="RefSeq" id="WP_005292966.1">
    <property type="nucleotide sequence ID" value="NC_007164.1"/>
</dbReference>
<dbReference type="SMR" id="Q4JUK3"/>
<dbReference type="STRING" id="306537.jk1332"/>
<dbReference type="GeneID" id="92738913"/>
<dbReference type="KEGG" id="cjk:jk1332"/>
<dbReference type="eggNOG" id="COG1637">
    <property type="taxonomic scope" value="Bacteria"/>
</dbReference>
<dbReference type="HOGENOM" id="CLU_069350_0_0_11"/>
<dbReference type="OrthoDB" id="3344925at2"/>
<dbReference type="Proteomes" id="UP000000545">
    <property type="component" value="Chromosome"/>
</dbReference>
<dbReference type="GO" id="GO:0005737">
    <property type="term" value="C:cytoplasm"/>
    <property type="evidence" value="ECO:0007669"/>
    <property type="project" value="UniProtKB-SubCell"/>
</dbReference>
<dbReference type="GO" id="GO:0003677">
    <property type="term" value="F:DNA binding"/>
    <property type="evidence" value="ECO:0007669"/>
    <property type="project" value="UniProtKB-KW"/>
</dbReference>
<dbReference type="GO" id="GO:0000014">
    <property type="term" value="F:single-stranded DNA endodeoxyribonuclease activity"/>
    <property type="evidence" value="ECO:0007669"/>
    <property type="project" value="UniProtKB-UniRule"/>
</dbReference>
<dbReference type="CDD" id="cd22341">
    <property type="entry name" value="NucS-like"/>
    <property type="match status" value="1"/>
</dbReference>
<dbReference type="Gene3D" id="2.70.180.20">
    <property type="match status" value="1"/>
</dbReference>
<dbReference type="Gene3D" id="3.40.1350.10">
    <property type="match status" value="1"/>
</dbReference>
<dbReference type="HAMAP" id="MF_00722">
    <property type="entry name" value="NucS"/>
    <property type="match status" value="1"/>
</dbReference>
<dbReference type="InterPro" id="IPR002793">
    <property type="entry name" value="Endonuclease_NucS"/>
</dbReference>
<dbReference type="InterPro" id="IPR048301">
    <property type="entry name" value="NucS_C"/>
</dbReference>
<dbReference type="InterPro" id="IPR048302">
    <property type="entry name" value="NucS_N"/>
</dbReference>
<dbReference type="InterPro" id="IPR049173">
    <property type="entry name" value="NucS_N_sf"/>
</dbReference>
<dbReference type="InterPro" id="IPR011856">
    <property type="entry name" value="tRNA_endonuc-like_dom_sf"/>
</dbReference>
<dbReference type="NCBIfam" id="NF002876">
    <property type="entry name" value="PRK03298.1"/>
    <property type="match status" value="1"/>
</dbReference>
<dbReference type="PANTHER" id="PTHR38814">
    <property type="entry name" value="ENDONUCLEASE NUCS"/>
    <property type="match status" value="1"/>
</dbReference>
<dbReference type="PANTHER" id="PTHR38814:SF1">
    <property type="entry name" value="ENDONUCLEASE NUCS"/>
    <property type="match status" value="1"/>
</dbReference>
<dbReference type="Pfam" id="PF01939">
    <property type="entry name" value="NucS_C"/>
    <property type="match status" value="1"/>
</dbReference>
<dbReference type="Pfam" id="PF21003">
    <property type="entry name" value="NucS_N"/>
    <property type="match status" value="1"/>
</dbReference>
<gene>
    <name evidence="1" type="primary">nucS</name>
    <name type="ordered locus">jk1332</name>
</gene>
<organism>
    <name type="scientific">Corynebacterium jeikeium (strain K411)</name>
    <dbReference type="NCBI Taxonomy" id="306537"/>
    <lineage>
        <taxon>Bacteria</taxon>
        <taxon>Bacillati</taxon>
        <taxon>Actinomycetota</taxon>
        <taxon>Actinomycetes</taxon>
        <taxon>Mycobacteriales</taxon>
        <taxon>Corynebacteriaceae</taxon>
        <taxon>Corynebacterium</taxon>
    </lineage>
</organism>
<reference key="1">
    <citation type="journal article" date="2005" name="J. Bacteriol.">
        <title>Complete genome sequence and analysis of the multiresistant nosocomial pathogen Corynebacterium jeikeium K411, a lipid-requiring bacterium of the human skin flora.</title>
        <authorList>
            <person name="Tauch A."/>
            <person name="Kaiser O."/>
            <person name="Hain T."/>
            <person name="Goesmann A."/>
            <person name="Weisshaar B."/>
            <person name="Albersmeier A."/>
            <person name="Bekel T."/>
            <person name="Bischoff N."/>
            <person name="Brune I."/>
            <person name="Chakraborty T."/>
            <person name="Kalinowski J."/>
            <person name="Meyer F."/>
            <person name="Rupp O."/>
            <person name="Schneiker S."/>
            <person name="Viehoever P."/>
            <person name="Puehler A."/>
        </authorList>
    </citation>
    <scope>NUCLEOTIDE SEQUENCE [LARGE SCALE GENOMIC DNA]</scope>
    <source>
        <strain>K411</strain>
    </source>
</reference>
<keyword id="KW-0963">Cytoplasm</keyword>
<keyword id="KW-0238">DNA-binding</keyword>
<keyword id="KW-0255">Endonuclease</keyword>
<keyword id="KW-0378">Hydrolase</keyword>
<keyword id="KW-0540">Nuclease</keyword>
<keyword id="KW-1185">Reference proteome</keyword>
<sequence>MRLVIARCCVDYVGRLEAHLPPADRLILLKADGSVSIHADDRAYKPLNWMMPPCSLEAVEASSFDGDDAPTEYSELGNEGVEQLWIVTNPKGEQLRIQIFEIYSDTEHDLGEDPGLVKDGVEAHLQELLAEQIEILGEGYSLIRREYPTAIGPVDILSKDSTGATVAVEIKRRGGIDGVEQLTRYVELLNRDELLAPVTGVFAAQEIKPQARTLAEDRGFRCVTLDYEAMRGTDSSELRLF</sequence>
<proteinExistence type="inferred from homology"/>
<feature type="chain" id="PRO_1000045829" description="Endonuclease NucS">
    <location>
        <begin position="1"/>
        <end position="241"/>
    </location>
</feature>
<protein>
    <recommendedName>
        <fullName evidence="1">Endonuclease NucS</fullName>
        <ecNumber evidence="1">3.1.-.-</ecNumber>
    </recommendedName>
</protein>
<name>NUCS_CORJK</name>
<evidence type="ECO:0000255" key="1">
    <source>
        <dbReference type="HAMAP-Rule" id="MF_00722"/>
    </source>
</evidence>
<comment type="function">
    <text evidence="1">Cleaves both 3' and 5' ssDNA extremities of branched DNA structures.</text>
</comment>
<comment type="subcellular location">
    <subcellularLocation>
        <location evidence="1">Cytoplasm</location>
    </subcellularLocation>
</comment>
<comment type="similarity">
    <text evidence="1">Belongs to the NucS endonuclease family.</text>
</comment>
<accession>Q4JUK3</accession>